<evidence type="ECO:0000255" key="1">
    <source>
        <dbReference type="HAMAP-Rule" id="MF_00204"/>
    </source>
</evidence>
<keyword id="KW-0067">ATP-binding</keyword>
<keyword id="KW-0963">Cytoplasm</keyword>
<keyword id="KW-0227">DNA damage</keyword>
<keyword id="KW-0228">DNA excision</keyword>
<keyword id="KW-0234">DNA repair</keyword>
<keyword id="KW-0267">Excision nuclease</keyword>
<keyword id="KW-0547">Nucleotide-binding</keyword>
<keyword id="KW-1185">Reference proteome</keyword>
<keyword id="KW-0742">SOS response</keyword>
<reference key="1">
    <citation type="journal article" date="2002" name="Proc. Natl. Acad. Sci. U.S.A.">
        <title>The complete genome sequence of Chlorobium tepidum TLS, a photosynthetic, anaerobic, green-sulfur bacterium.</title>
        <authorList>
            <person name="Eisen J.A."/>
            <person name="Nelson K.E."/>
            <person name="Paulsen I.T."/>
            <person name="Heidelberg J.F."/>
            <person name="Wu M."/>
            <person name="Dodson R.J."/>
            <person name="DeBoy R.T."/>
            <person name="Gwinn M.L."/>
            <person name="Nelson W.C."/>
            <person name="Haft D.H."/>
            <person name="Hickey E.K."/>
            <person name="Peterson J.D."/>
            <person name="Durkin A.S."/>
            <person name="Kolonay J.F."/>
            <person name="Yang F."/>
            <person name="Holt I.E."/>
            <person name="Umayam L.A."/>
            <person name="Mason T.M."/>
            <person name="Brenner M."/>
            <person name="Shea T.P."/>
            <person name="Parksey D.S."/>
            <person name="Nierman W.C."/>
            <person name="Feldblyum T.V."/>
            <person name="Hansen C.L."/>
            <person name="Craven M.B."/>
            <person name="Radune D."/>
            <person name="Vamathevan J.J."/>
            <person name="Khouri H.M."/>
            <person name="White O."/>
            <person name="Gruber T.M."/>
            <person name="Ketchum K.A."/>
            <person name="Venter J.C."/>
            <person name="Tettelin H."/>
            <person name="Bryant D.A."/>
            <person name="Fraser C.M."/>
        </authorList>
    </citation>
    <scope>NUCLEOTIDE SEQUENCE [LARGE SCALE GENOMIC DNA]</scope>
    <source>
        <strain>ATCC 49652 / DSM 12025 / NBRC 103806 / TLS</strain>
    </source>
</reference>
<gene>
    <name evidence="1" type="primary">uvrB</name>
    <name type="ordered locus">CT1546</name>
</gene>
<dbReference type="EMBL" id="AE006470">
    <property type="protein sequence ID" value="AAM72772.1"/>
    <property type="molecule type" value="Genomic_DNA"/>
</dbReference>
<dbReference type="RefSeq" id="NP_662430.1">
    <property type="nucleotide sequence ID" value="NC_002932.3"/>
</dbReference>
<dbReference type="RefSeq" id="WP_010933211.1">
    <property type="nucleotide sequence ID" value="NC_002932.3"/>
</dbReference>
<dbReference type="SMR" id="Q8KC79"/>
<dbReference type="STRING" id="194439.CT1546"/>
<dbReference type="EnsemblBacteria" id="AAM72772">
    <property type="protein sequence ID" value="AAM72772"/>
    <property type="gene ID" value="CT1546"/>
</dbReference>
<dbReference type="KEGG" id="cte:CT1546"/>
<dbReference type="PATRIC" id="fig|194439.7.peg.1400"/>
<dbReference type="eggNOG" id="COG0556">
    <property type="taxonomic scope" value="Bacteria"/>
</dbReference>
<dbReference type="HOGENOM" id="CLU_009621_2_1_10"/>
<dbReference type="OrthoDB" id="9806651at2"/>
<dbReference type="Proteomes" id="UP000001007">
    <property type="component" value="Chromosome"/>
</dbReference>
<dbReference type="GO" id="GO:0005737">
    <property type="term" value="C:cytoplasm"/>
    <property type="evidence" value="ECO:0007669"/>
    <property type="project" value="UniProtKB-SubCell"/>
</dbReference>
<dbReference type="GO" id="GO:0009380">
    <property type="term" value="C:excinuclease repair complex"/>
    <property type="evidence" value="ECO:0007669"/>
    <property type="project" value="InterPro"/>
</dbReference>
<dbReference type="GO" id="GO:0005524">
    <property type="term" value="F:ATP binding"/>
    <property type="evidence" value="ECO:0007669"/>
    <property type="project" value="UniProtKB-UniRule"/>
</dbReference>
<dbReference type="GO" id="GO:0016887">
    <property type="term" value="F:ATP hydrolysis activity"/>
    <property type="evidence" value="ECO:0007669"/>
    <property type="project" value="InterPro"/>
</dbReference>
<dbReference type="GO" id="GO:0003677">
    <property type="term" value="F:DNA binding"/>
    <property type="evidence" value="ECO:0007669"/>
    <property type="project" value="UniProtKB-UniRule"/>
</dbReference>
<dbReference type="GO" id="GO:0009381">
    <property type="term" value="F:excinuclease ABC activity"/>
    <property type="evidence" value="ECO:0007669"/>
    <property type="project" value="UniProtKB-UniRule"/>
</dbReference>
<dbReference type="GO" id="GO:0006289">
    <property type="term" value="P:nucleotide-excision repair"/>
    <property type="evidence" value="ECO:0007669"/>
    <property type="project" value="UniProtKB-UniRule"/>
</dbReference>
<dbReference type="GO" id="GO:0009432">
    <property type="term" value="P:SOS response"/>
    <property type="evidence" value="ECO:0007669"/>
    <property type="project" value="UniProtKB-UniRule"/>
</dbReference>
<dbReference type="CDD" id="cd17916">
    <property type="entry name" value="DEXHc_UvrB"/>
    <property type="match status" value="1"/>
</dbReference>
<dbReference type="CDD" id="cd18790">
    <property type="entry name" value="SF2_C_UvrB"/>
    <property type="match status" value="1"/>
</dbReference>
<dbReference type="Gene3D" id="3.40.50.300">
    <property type="entry name" value="P-loop containing nucleotide triphosphate hydrolases"/>
    <property type="match status" value="3"/>
</dbReference>
<dbReference type="Gene3D" id="4.10.860.10">
    <property type="entry name" value="UVR domain"/>
    <property type="match status" value="1"/>
</dbReference>
<dbReference type="HAMAP" id="MF_00204">
    <property type="entry name" value="UvrB"/>
    <property type="match status" value="1"/>
</dbReference>
<dbReference type="InterPro" id="IPR006935">
    <property type="entry name" value="Helicase/UvrB_N"/>
</dbReference>
<dbReference type="InterPro" id="IPR014001">
    <property type="entry name" value="Helicase_ATP-bd"/>
</dbReference>
<dbReference type="InterPro" id="IPR001650">
    <property type="entry name" value="Helicase_C-like"/>
</dbReference>
<dbReference type="InterPro" id="IPR027417">
    <property type="entry name" value="P-loop_NTPase"/>
</dbReference>
<dbReference type="InterPro" id="IPR001943">
    <property type="entry name" value="UVR_dom"/>
</dbReference>
<dbReference type="InterPro" id="IPR036876">
    <property type="entry name" value="UVR_dom_sf"/>
</dbReference>
<dbReference type="InterPro" id="IPR004807">
    <property type="entry name" value="UvrB"/>
</dbReference>
<dbReference type="InterPro" id="IPR041471">
    <property type="entry name" value="UvrB_inter"/>
</dbReference>
<dbReference type="InterPro" id="IPR024759">
    <property type="entry name" value="UvrB_YAD/RRR_dom"/>
</dbReference>
<dbReference type="NCBIfam" id="NF003673">
    <property type="entry name" value="PRK05298.1"/>
    <property type="match status" value="1"/>
</dbReference>
<dbReference type="NCBIfam" id="TIGR00631">
    <property type="entry name" value="uvrb"/>
    <property type="match status" value="1"/>
</dbReference>
<dbReference type="PANTHER" id="PTHR24029">
    <property type="entry name" value="UVRABC SYSTEM PROTEIN B"/>
    <property type="match status" value="1"/>
</dbReference>
<dbReference type="PANTHER" id="PTHR24029:SF0">
    <property type="entry name" value="UVRABC SYSTEM PROTEIN B"/>
    <property type="match status" value="1"/>
</dbReference>
<dbReference type="Pfam" id="PF00271">
    <property type="entry name" value="Helicase_C"/>
    <property type="match status" value="1"/>
</dbReference>
<dbReference type="Pfam" id="PF04851">
    <property type="entry name" value="ResIII"/>
    <property type="match status" value="1"/>
</dbReference>
<dbReference type="Pfam" id="PF02151">
    <property type="entry name" value="UVR"/>
    <property type="match status" value="1"/>
</dbReference>
<dbReference type="Pfam" id="PF12344">
    <property type="entry name" value="UvrB"/>
    <property type="match status" value="1"/>
</dbReference>
<dbReference type="Pfam" id="PF17757">
    <property type="entry name" value="UvrB_inter"/>
    <property type="match status" value="1"/>
</dbReference>
<dbReference type="SMART" id="SM00487">
    <property type="entry name" value="DEXDc"/>
    <property type="match status" value="1"/>
</dbReference>
<dbReference type="SMART" id="SM00490">
    <property type="entry name" value="HELICc"/>
    <property type="match status" value="1"/>
</dbReference>
<dbReference type="SUPFAM" id="SSF46600">
    <property type="entry name" value="C-terminal UvrC-binding domain of UvrB"/>
    <property type="match status" value="1"/>
</dbReference>
<dbReference type="SUPFAM" id="SSF52540">
    <property type="entry name" value="P-loop containing nucleoside triphosphate hydrolases"/>
    <property type="match status" value="2"/>
</dbReference>
<dbReference type="PROSITE" id="PS51192">
    <property type="entry name" value="HELICASE_ATP_BIND_1"/>
    <property type="match status" value="1"/>
</dbReference>
<dbReference type="PROSITE" id="PS51194">
    <property type="entry name" value="HELICASE_CTER"/>
    <property type="match status" value="1"/>
</dbReference>
<dbReference type="PROSITE" id="PS50151">
    <property type="entry name" value="UVR"/>
    <property type="match status" value="1"/>
</dbReference>
<accession>Q8KC79</accession>
<proteinExistence type="inferred from homology"/>
<name>UVRB_CHLTE</name>
<feature type="chain" id="PRO_0000227301" description="UvrABC system protein B">
    <location>
        <begin position="1"/>
        <end position="684"/>
    </location>
</feature>
<feature type="domain" description="Helicase ATP-binding" evidence="1">
    <location>
        <begin position="32"/>
        <end position="420"/>
    </location>
</feature>
<feature type="domain" description="Helicase C-terminal" evidence="1">
    <location>
        <begin position="437"/>
        <end position="603"/>
    </location>
</feature>
<feature type="domain" description="UVR" evidence="1">
    <location>
        <begin position="643"/>
        <end position="678"/>
    </location>
</feature>
<feature type="short sequence motif" description="Beta-hairpin">
    <location>
        <begin position="98"/>
        <end position="121"/>
    </location>
</feature>
<feature type="binding site" evidence="1">
    <location>
        <begin position="45"/>
        <end position="52"/>
    </location>
    <ligand>
        <name>ATP</name>
        <dbReference type="ChEBI" id="CHEBI:30616"/>
    </ligand>
</feature>
<protein>
    <recommendedName>
        <fullName evidence="1">UvrABC system protein B</fullName>
        <shortName evidence="1">Protein UvrB</shortName>
    </recommendedName>
    <alternativeName>
        <fullName evidence="1">Excinuclease ABC subunit B</fullName>
    </alternativeName>
</protein>
<comment type="function">
    <text evidence="1">The UvrABC repair system catalyzes the recognition and processing of DNA lesions. A damage recognition complex composed of 2 UvrA and 2 UvrB subunits scans DNA for abnormalities. Upon binding of the UvrA(2)B(2) complex to a putative damaged site, the DNA wraps around one UvrB monomer. DNA wrap is dependent on ATP binding by UvrB and probably causes local melting of the DNA helix, facilitating insertion of UvrB beta-hairpin between the DNA strands. Then UvrB probes one DNA strand for the presence of a lesion. If a lesion is found the UvrA subunits dissociate and the UvrB-DNA preincision complex is formed. This complex is subsequently bound by UvrC and the second UvrB is released. If no lesion is found, the DNA wraps around the other UvrB subunit that will check the other stand for damage.</text>
</comment>
<comment type="subunit">
    <text evidence="1">Forms a heterotetramer with UvrA during the search for lesions. Interacts with UvrC in an incision complex.</text>
</comment>
<comment type="subcellular location">
    <subcellularLocation>
        <location evidence="1">Cytoplasm</location>
    </subcellularLocation>
</comment>
<comment type="domain">
    <text evidence="1">The beta-hairpin motif is involved in DNA binding.</text>
</comment>
<comment type="similarity">
    <text evidence="1">Belongs to the UvrB family.</text>
</comment>
<organism>
    <name type="scientific">Chlorobaculum tepidum (strain ATCC 49652 / DSM 12025 / NBRC 103806 / TLS)</name>
    <name type="common">Chlorobium tepidum</name>
    <dbReference type="NCBI Taxonomy" id="194439"/>
    <lineage>
        <taxon>Bacteria</taxon>
        <taxon>Pseudomonadati</taxon>
        <taxon>Chlorobiota</taxon>
        <taxon>Chlorobiia</taxon>
        <taxon>Chlorobiales</taxon>
        <taxon>Chlorobiaceae</taxon>
        <taxon>Chlorobaculum</taxon>
    </lineage>
</organism>
<sequence>MRNVVHRGGEFKLESPYGPTGDQPSAIKALTDGVLRGDRWQTLLGVTGSGKTFTVSNVIAQVNRPTLVLSHNKTLAAQLYGELKQFFPHNAVEYFISYYDFYQPEAYIPSLDKYIAKDLKINDEIERLRLRATSALLSGRNDVIVVSSVSCIYGLGSPEDWMAQIVELRQGMELDRDEFLQRLVALHYFRDDVDLSPGRFRVRGDVIDLVPGHEELALRIEFFGSEIDSIHTFDPKSGEIIGRDEYAFIYPARQFVADSEKLEVAMLAIENELAERLNALRAEEKLVEAQRLEERTRYDLEMMKELGYCSGIENYARHIAGRKPGERPWCLLDYFPEDFLVVVDESHVTLPQIRGMYGGDRSRKTVLVEHGFRLPSALDNRPLRFEEFEEMVPQVICVSATPSAHELMRSGGVVVEQLIRPTGLLDPQIEVHPVAGQIDHLLARIRERIAKGQKSLVLTLTKRMSEDLHAYFRKLGLRSQYLHSEIKSLERMQILRELRAGDIEVLVGVNLLREGLDLPEVALVAILDADKEGFLRDATSLMQIAGRAARNVEGLVLFYADKITDSMREVLDETERRRRIQREYNEKHGIEPRSIIKSVDQVLNTTSVADAEERYRRKRLGLQKRPELELRGVLDSMSRSDVMLMVAEMNAEMQKAAEQTDYEKAAYLRDEILMLQERIEQMTE</sequence>